<organism>
    <name type="scientific">Homo sapiens</name>
    <name type="common">Human</name>
    <dbReference type="NCBI Taxonomy" id="9606"/>
    <lineage>
        <taxon>Eukaryota</taxon>
        <taxon>Metazoa</taxon>
        <taxon>Chordata</taxon>
        <taxon>Craniata</taxon>
        <taxon>Vertebrata</taxon>
        <taxon>Euteleostomi</taxon>
        <taxon>Mammalia</taxon>
        <taxon>Eutheria</taxon>
        <taxon>Euarchontoglires</taxon>
        <taxon>Primates</taxon>
        <taxon>Haplorrhini</taxon>
        <taxon>Catarrhini</taxon>
        <taxon>Hominidae</taxon>
        <taxon>Homo</taxon>
    </lineage>
</organism>
<accession>O15544</accession>
<comment type="tissue specificity">
    <text evidence="1">Expressed in fetus (aged from 7 to 8 weeks). Weakly expressed in lymphocytes.</text>
</comment>
<protein>
    <recommendedName>
        <fullName evidence="2">Protein GR6</fullName>
    </recommendedName>
</protein>
<gene>
    <name evidence="3" type="primary">LINC01565</name>
    <name evidence="3" type="synonym">C3orf27</name>
    <name evidence="2" type="synonym">GR6</name>
</gene>
<feature type="chain" id="PRO_0000087573" description="Protein GR6">
    <location>
        <begin position="1"/>
        <end position="149"/>
    </location>
</feature>
<proteinExistence type="evidence at transcript level"/>
<keyword id="KW-1185">Reference proteome</keyword>
<evidence type="ECO:0000269" key="1">
    <source>
    </source>
</evidence>
<evidence type="ECO:0000303" key="2">
    <source>
    </source>
</evidence>
<evidence type="ECO:0000312" key="3">
    <source>
        <dbReference type="HGNC" id="HGNC:17099"/>
    </source>
</evidence>
<dbReference type="EMBL" id="AF008191">
    <property type="protein sequence ID" value="AAB65247.1"/>
    <property type="molecule type" value="Genomic_DNA"/>
</dbReference>
<dbReference type="EMBL" id="AF008192">
    <property type="protein sequence ID" value="AAB65248.1"/>
    <property type="molecule type" value="mRNA"/>
</dbReference>
<dbReference type="EMBL" id="AC080005">
    <property type="status" value="NOT_ANNOTATED_CDS"/>
    <property type="molecule type" value="Genomic_DNA"/>
</dbReference>
<dbReference type="BioGRID" id="117002">
    <property type="interactions" value="88"/>
</dbReference>
<dbReference type="IntAct" id="O15544">
    <property type="interactions" value="9"/>
</dbReference>
<dbReference type="iPTMnet" id="O15544"/>
<dbReference type="PhosphoSitePlus" id="O15544"/>
<dbReference type="BioMuta" id="HGNC:17099"/>
<dbReference type="PaxDb" id="9606-ENSP00000483047"/>
<dbReference type="DNASU" id="23434"/>
<dbReference type="AGR" id="HGNC:17099"/>
<dbReference type="GeneCards" id="LINC01565"/>
<dbReference type="HGNC" id="HGNC:17099">
    <property type="gene designation" value="LINC01565"/>
</dbReference>
<dbReference type="neXtProt" id="NX_O15544"/>
<dbReference type="PharmGKB" id="PA142672388"/>
<dbReference type="eggNOG" id="ENOG502TEIZ">
    <property type="taxonomic scope" value="Eukaryota"/>
</dbReference>
<dbReference type="InParanoid" id="O15544"/>
<dbReference type="PAN-GO" id="O15544">
    <property type="GO annotations" value="0 GO annotations based on evolutionary models"/>
</dbReference>
<dbReference type="PhylomeDB" id="O15544"/>
<dbReference type="TreeFam" id="TF340350"/>
<dbReference type="PathwayCommons" id="O15544"/>
<dbReference type="SignaLink" id="O15544"/>
<dbReference type="Pharos" id="O15544">
    <property type="development level" value="Tdark"/>
</dbReference>
<dbReference type="PRO" id="PR:O15544"/>
<dbReference type="Proteomes" id="UP000005640">
    <property type="component" value="Unplaced"/>
</dbReference>
<dbReference type="RNAct" id="O15544">
    <property type="molecule type" value="protein"/>
</dbReference>
<reference key="1">
    <citation type="journal article" date="1997" name="Cancer Res.">
        <title>Activation of a novel gene in 3q21 and identification of intergenic fusion transcripts with ecotropic viral insertion site I in leukemia.</title>
        <authorList>
            <person name="Pekarsky Y."/>
            <person name="Rynditch A."/>
            <person name="Wieser R."/>
            <person name="Fonatsch C."/>
            <person name="Gardiner K."/>
        </authorList>
    </citation>
    <scope>NUCLEOTIDE SEQUENCE [GENOMIC DNA / MRNA]</scope>
    <scope>TISSUE SPECIFICITY</scope>
</reference>
<reference key="2">
    <citation type="journal article" date="2006" name="Nature">
        <title>The DNA sequence, annotation and analysis of human chromosome 3.</title>
        <authorList>
            <person name="Muzny D.M."/>
            <person name="Scherer S.E."/>
            <person name="Kaul R."/>
            <person name="Wang J."/>
            <person name="Yu J."/>
            <person name="Sudbrak R."/>
            <person name="Buhay C.J."/>
            <person name="Chen R."/>
            <person name="Cree A."/>
            <person name="Ding Y."/>
            <person name="Dugan-Rocha S."/>
            <person name="Gill R."/>
            <person name="Gunaratne P."/>
            <person name="Harris R.A."/>
            <person name="Hawes A.C."/>
            <person name="Hernandez J."/>
            <person name="Hodgson A.V."/>
            <person name="Hume J."/>
            <person name="Jackson A."/>
            <person name="Khan Z.M."/>
            <person name="Kovar-Smith C."/>
            <person name="Lewis L.R."/>
            <person name="Lozado R.J."/>
            <person name="Metzker M.L."/>
            <person name="Milosavljevic A."/>
            <person name="Miner G.R."/>
            <person name="Morgan M.B."/>
            <person name="Nazareth L.V."/>
            <person name="Scott G."/>
            <person name="Sodergren E."/>
            <person name="Song X.-Z."/>
            <person name="Steffen D."/>
            <person name="Wei S."/>
            <person name="Wheeler D.A."/>
            <person name="Wright M.W."/>
            <person name="Worley K.C."/>
            <person name="Yuan Y."/>
            <person name="Zhang Z."/>
            <person name="Adams C.Q."/>
            <person name="Ansari-Lari M.A."/>
            <person name="Ayele M."/>
            <person name="Brown M.J."/>
            <person name="Chen G."/>
            <person name="Chen Z."/>
            <person name="Clendenning J."/>
            <person name="Clerc-Blankenburg K.P."/>
            <person name="Chen R."/>
            <person name="Chen Z."/>
            <person name="Davis C."/>
            <person name="Delgado O."/>
            <person name="Dinh H.H."/>
            <person name="Dong W."/>
            <person name="Draper H."/>
            <person name="Ernst S."/>
            <person name="Fu G."/>
            <person name="Gonzalez-Garay M.L."/>
            <person name="Garcia D.K."/>
            <person name="Gillett W."/>
            <person name="Gu J."/>
            <person name="Hao B."/>
            <person name="Haugen E."/>
            <person name="Havlak P."/>
            <person name="He X."/>
            <person name="Hennig S."/>
            <person name="Hu S."/>
            <person name="Huang W."/>
            <person name="Jackson L.R."/>
            <person name="Jacob L.S."/>
            <person name="Kelly S.H."/>
            <person name="Kube M."/>
            <person name="Levy R."/>
            <person name="Li Z."/>
            <person name="Liu B."/>
            <person name="Liu J."/>
            <person name="Liu W."/>
            <person name="Lu J."/>
            <person name="Maheshwari M."/>
            <person name="Nguyen B.-V."/>
            <person name="Okwuonu G.O."/>
            <person name="Palmeiri A."/>
            <person name="Pasternak S."/>
            <person name="Perez L.M."/>
            <person name="Phelps K.A."/>
            <person name="Plopper F.J."/>
            <person name="Qiang B."/>
            <person name="Raymond C."/>
            <person name="Rodriguez R."/>
            <person name="Saenphimmachak C."/>
            <person name="Santibanez J."/>
            <person name="Shen H."/>
            <person name="Shen Y."/>
            <person name="Subramanian S."/>
            <person name="Tabor P.E."/>
            <person name="Verduzco D."/>
            <person name="Waldron L."/>
            <person name="Wang J."/>
            <person name="Wang J."/>
            <person name="Wang Q."/>
            <person name="Williams G.A."/>
            <person name="Wong G.K.-S."/>
            <person name="Yao Z."/>
            <person name="Zhang J."/>
            <person name="Zhang X."/>
            <person name="Zhao G."/>
            <person name="Zhou J."/>
            <person name="Zhou Y."/>
            <person name="Nelson D."/>
            <person name="Lehrach H."/>
            <person name="Reinhardt R."/>
            <person name="Naylor S.L."/>
            <person name="Yang H."/>
            <person name="Olson M."/>
            <person name="Weinstock G."/>
            <person name="Gibbs R.A."/>
        </authorList>
    </citation>
    <scope>NUCLEOTIDE SEQUENCE [LARGE SCALE GENOMIC DNA]</scope>
</reference>
<name>GR6_HUMAN</name>
<sequence>MKEALHQIVVRCSELVSSTSLPRLSVSRLQGPPDSQPLGTLGQGGWKLLGIVGSLAPETLGGLGTEFGPCTHPLPFDMVRERERDDELRQGWLLQCPQCARTLLCHCGPFLTPPSQTSSSGFQLCSLKPSGSLVTATEPLSNFAFSYFP</sequence>